<proteinExistence type="inferred from homology"/>
<reference key="1">
    <citation type="journal article" date="2002" name="Proc. Natl. Acad. Sci. U.S.A.">
        <title>The genome sequence of the facultative intracellular pathogen Brucella melitensis.</title>
        <authorList>
            <person name="DelVecchio V.G."/>
            <person name="Kapatral V."/>
            <person name="Redkar R.J."/>
            <person name="Patra G."/>
            <person name="Mujer C."/>
            <person name="Los T."/>
            <person name="Ivanova N."/>
            <person name="Anderson I."/>
            <person name="Bhattacharyya A."/>
            <person name="Lykidis A."/>
            <person name="Reznik G."/>
            <person name="Jablonski L."/>
            <person name="Larsen N."/>
            <person name="D'Souza M."/>
            <person name="Bernal A."/>
            <person name="Mazur M."/>
            <person name="Goltsman E."/>
            <person name="Selkov E."/>
            <person name="Elzer P.H."/>
            <person name="Hagius S."/>
            <person name="O'Callaghan D."/>
            <person name="Letesson J.-J."/>
            <person name="Haselkorn R."/>
            <person name="Kyrpides N.C."/>
            <person name="Overbeek R."/>
        </authorList>
    </citation>
    <scope>NUCLEOTIDE SEQUENCE [LARGE SCALE GENOMIC DNA]</scope>
    <source>
        <strain>ATCC 23456 / CCUG 17765 / NCTC 10094 / 16M</strain>
    </source>
</reference>
<keyword id="KW-0963">Cytoplasm</keyword>
<keyword id="KW-0396">Initiation factor</keyword>
<keyword id="KW-0648">Protein biosynthesis</keyword>
<accession>P0A3K8</accession>
<accession>Q8YE68</accession>
<accession>Q9L8Q0</accession>
<evidence type="ECO:0000255" key="1">
    <source>
        <dbReference type="HAMAP-Rule" id="MF_00080"/>
    </source>
</evidence>
<evidence type="ECO:0000256" key="2">
    <source>
        <dbReference type="SAM" id="MobiDB-lite"/>
    </source>
</evidence>
<evidence type="ECO:0000305" key="3"/>
<protein>
    <recommendedName>
        <fullName evidence="1">Translation initiation factor IF-3</fullName>
    </recommendedName>
</protein>
<name>IF3_BRUME</name>
<dbReference type="EMBL" id="AE008917">
    <property type="protein sequence ID" value="AAL53191.1"/>
    <property type="status" value="ALT_INIT"/>
    <property type="molecule type" value="Genomic_DNA"/>
</dbReference>
<dbReference type="PIR" id="AD3503">
    <property type="entry name" value="AD3503"/>
</dbReference>
<dbReference type="SMR" id="P0A3K8"/>
<dbReference type="KEGG" id="bme:BMEI2010"/>
<dbReference type="eggNOG" id="COG0290">
    <property type="taxonomic scope" value="Bacteria"/>
</dbReference>
<dbReference type="Proteomes" id="UP000000419">
    <property type="component" value="Chromosome I"/>
</dbReference>
<dbReference type="GO" id="GO:0005829">
    <property type="term" value="C:cytosol"/>
    <property type="evidence" value="ECO:0007669"/>
    <property type="project" value="TreeGrafter"/>
</dbReference>
<dbReference type="GO" id="GO:0016020">
    <property type="term" value="C:membrane"/>
    <property type="evidence" value="ECO:0007669"/>
    <property type="project" value="TreeGrafter"/>
</dbReference>
<dbReference type="GO" id="GO:0043022">
    <property type="term" value="F:ribosome binding"/>
    <property type="evidence" value="ECO:0007669"/>
    <property type="project" value="TreeGrafter"/>
</dbReference>
<dbReference type="GO" id="GO:0003743">
    <property type="term" value="F:translation initiation factor activity"/>
    <property type="evidence" value="ECO:0007669"/>
    <property type="project" value="UniProtKB-UniRule"/>
</dbReference>
<dbReference type="GO" id="GO:0032790">
    <property type="term" value="P:ribosome disassembly"/>
    <property type="evidence" value="ECO:0007669"/>
    <property type="project" value="TreeGrafter"/>
</dbReference>
<dbReference type="FunFam" id="3.30.110.10:FF:000001">
    <property type="entry name" value="Translation initiation factor IF-3"/>
    <property type="match status" value="1"/>
</dbReference>
<dbReference type="Gene3D" id="3.30.110.10">
    <property type="entry name" value="Translation initiation factor 3 (IF-3), C-terminal domain"/>
    <property type="match status" value="1"/>
</dbReference>
<dbReference type="Gene3D" id="3.10.20.80">
    <property type="entry name" value="Translation initiation factor 3 (IF-3), N-terminal domain"/>
    <property type="match status" value="1"/>
</dbReference>
<dbReference type="HAMAP" id="MF_00080">
    <property type="entry name" value="IF_3"/>
    <property type="match status" value="1"/>
</dbReference>
<dbReference type="InterPro" id="IPR036788">
    <property type="entry name" value="T_IF-3_C_sf"/>
</dbReference>
<dbReference type="InterPro" id="IPR036787">
    <property type="entry name" value="T_IF-3_N_sf"/>
</dbReference>
<dbReference type="InterPro" id="IPR001288">
    <property type="entry name" value="Translation_initiation_fac_3"/>
</dbReference>
<dbReference type="InterPro" id="IPR019815">
    <property type="entry name" value="Translation_initiation_fac_3_C"/>
</dbReference>
<dbReference type="InterPro" id="IPR019814">
    <property type="entry name" value="Translation_initiation_fac_3_N"/>
</dbReference>
<dbReference type="NCBIfam" id="TIGR00168">
    <property type="entry name" value="infC"/>
    <property type="match status" value="1"/>
</dbReference>
<dbReference type="PANTHER" id="PTHR10938">
    <property type="entry name" value="TRANSLATION INITIATION FACTOR IF-3"/>
    <property type="match status" value="1"/>
</dbReference>
<dbReference type="PANTHER" id="PTHR10938:SF0">
    <property type="entry name" value="TRANSLATION INITIATION FACTOR IF-3, MITOCHONDRIAL"/>
    <property type="match status" value="1"/>
</dbReference>
<dbReference type="Pfam" id="PF00707">
    <property type="entry name" value="IF3_C"/>
    <property type="match status" value="1"/>
</dbReference>
<dbReference type="Pfam" id="PF05198">
    <property type="entry name" value="IF3_N"/>
    <property type="match status" value="1"/>
</dbReference>
<dbReference type="SUPFAM" id="SSF55200">
    <property type="entry name" value="Translation initiation factor IF3, C-terminal domain"/>
    <property type="match status" value="1"/>
</dbReference>
<dbReference type="SUPFAM" id="SSF54364">
    <property type="entry name" value="Translation initiation factor IF3, N-terminal domain"/>
    <property type="match status" value="1"/>
</dbReference>
<sequence length="178" mass="20445">MRRPFRATPVQKDGPRSNRDIRVPRVQLIDAEGQNHGDVSIQEAMAMAEEAGLDLVEIVPNAEPPVCKIVDLGKLKYQNQKKAAEARKKQKTVEIKEIKMRPNIDTHDYEVKMKAAQRFFEEGDKVKVTLRFRGREMAHQELGMKLLQRVKEDTVEIAKVESEPKLEGRQMMMVLAPR</sequence>
<feature type="chain" id="PRO_0000177493" description="Translation initiation factor IF-3">
    <location>
        <begin position="1"/>
        <end position="178"/>
    </location>
</feature>
<feature type="region of interest" description="Disordered" evidence="2">
    <location>
        <begin position="1"/>
        <end position="20"/>
    </location>
</feature>
<gene>
    <name evidence="1" type="primary">infC</name>
    <name type="synonym">pifC</name>
    <name type="ordered locus">BMEI2010</name>
</gene>
<comment type="function">
    <text evidence="1">IF-3 binds to the 30S ribosomal subunit and shifts the equilibrium between 70S ribosomes and their 50S and 30S subunits in favor of the free subunits, thus enhancing the availability of 30S subunits on which protein synthesis initiation begins.</text>
</comment>
<comment type="subunit">
    <text evidence="1">Monomer.</text>
</comment>
<comment type="subcellular location">
    <subcellularLocation>
        <location evidence="1">Cytoplasm</location>
    </subcellularLocation>
</comment>
<comment type="similarity">
    <text evidence="1">Belongs to the IF-3 family.</text>
</comment>
<comment type="sequence caution" evidence="3">
    <conflict type="erroneous initiation">
        <sequence resource="EMBL-CDS" id="AAL53191"/>
    </conflict>
</comment>
<organism>
    <name type="scientific">Brucella melitensis biotype 1 (strain ATCC 23456 / CCUG 17765 / NCTC 10094 / 16M)</name>
    <dbReference type="NCBI Taxonomy" id="224914"/>
    <lineage>
        <taxon>Bacteria</taxon>
        <taxon>Pseudomonadati</taxon>
        <taxon>Pseudomonadota</taxon>
        <taxon>Alphaproteobacteria</taxon>
        <taxon>Hyphomicrobiales</taxon>
        <taxon>Brucellaceae</taxon>
        <taxon>Brucella/Ochrobactrum group</taxon>
        <taxon>Brucella</taxon>
    </lineage>
</organism>